<keyword id="KW-1185">Reference proteome</keyword>
<keyword id="KW-0687">Ribonucleoprotein</keyword>
<keyword id="KW-0689">Ribosomal protein</keyword>
<keyword id="KW-0694">RNA-binding</keyword>
<keyword id="KW-0699">rRNA-binding</keyword>
<protein>
    <recommendedName>
        <fullName evidence="1">Small ribosomal subunit protein uS19</fullName>
    </recommendedName>
    <alternativeName>
        <fullName evidence="2">30S ribosomal protein S19</fullName>
    </alternativeName>
</protein>
<comment type="function">
    <text evidence="1">Protein S19 forms a complex with S13 that binds strongly to the 16S ribosomal RNA.</text>
</comment>
<comment type="similarity">
    <text evidence="1">Belongs to the universal ribosomal protein uS19 family.</text>
</comment>
<gene>
    <name evidence="1" type="primary">rpsS</name>
    <name type="ordered locus">azo3413</name>
</gene>
<name>RS19_AZOSB</name>
<reference key="1">
    <citation type="journal article" date="2006" name="Nat. Biotechnol.">
        <title>Complete genome of the mutualistic, N2-fixing grass endophyte Azoarcus sp. strain BH72.</title>
        <authorList>
            <person name="Krause A."/>
            <person name="Ramakumar A."/>
            <person name="Bartels D."/>
            <person name="Battistoni F."/>
            <person name="Bekel T."/>
            <person name="Boch J."/>
            <person name="Boehm M."/>
            <person name="Friedrich F."/>
            <person name="Hurek T."/>
            <person name="Krause L."/>
            <person name="Linke B."/>
            <person name="McHardy A.C."/>
            <person name="Sarkar A."/>
            <person name="Schneiker S."/>
            <person name="Syed A.A."/>
            <person name="Thauer R."/>
            <person name="Vorhoelter F.-J."/>
            <person name="Weidner S."/>
            <person name="Puehler A."/>
            <person name="Reinhold-Hurek B."/>
            <person name="Kaiser O."/>
            <person name="Goesmann A."/>
        </authorList>
    </citation>
    <scope>NUCLEOTIDE SEQUENCE [LARGE SCALE GENOMIC DNA]</scope>
    <source>
        <strain>BH72</strain>
    </source>
</reference>
<organism>
    <name type="scientific">Azoarcus sp. (strain BH72)</name>
    <dbReference type="NCBI Taxonomy" id="418699"/>
    <lineage>
        <taxon>Bacteria</taxon>
        <taxon>Pseudomonadati</taxon>
        <taxon>Pseudomonadota</taxon>
        <taxon>Betaproteobacteria</taxon>
        <taxon>Rhodocyclales</taxon>
        <taxon>Zoogloeaceae</taxon>
        <taxon>Azoarcus</taxon>
    </lineage>
</organism>
<evidence type="ECO:0000255" key="1">
    <source>
        <dbReference type="HAMAP-Rule" id="MF_00531"/>
    </source>
</evidence>
<evidence type="ECO:0000305" key="2"/>
<feature type="chain" id="PRO_1000051011" description="Small ribosomal subunit protein uS19">
    <location>
        <begin position="1"/>
        <end position="91"/>
    </location>
</feature>
<proteinExistence type="inferred from homology"/>
<sequence>MARSIKKGPFIDAHLLKKVDAARASNDKRPIKTWSRRSTVLPDFVGLTIAVHNGRQHIPVYVSENMVGHKLGEFALTRTFKGHAASKKAKR</sequence>
<accession>A1KB23</accession>
<dbReference type="EMBL" id="AM406670">
    <property type="protein sequence ID" value="CAL96029.1"/>
    <property type="molecule type" value="Genomic_DNA"/>
</dbReference>
<dbReference type="RefSeq" id="WP_011767136.1">
    <property type="nucleotide sequence ID" value="NC_008702.1"/>
</dbReference>
<dbReference type="SMR" id="A1KB23"/>
<dbReference type="STRING" id="62928.azo3413"/>
<dbReference type="KEGG" id="aoa:dqs_3552"/>
<dbReference type="KEGG" id="azo:azo3413"/>
<dbReference type="eggNOG" id="COG0185">
    <property type="taxonomic scope" value="Bacteria"/>
</dbReference>
<dbReference type="HOGENOM" id="CLU_144911_0_1_4"/>
<dbReference type="OrthoDB" id="9797833at2"/>
<dbReference type="Proteomes" id="UP000002588">
    <property type="component" value="Chromosome"/>
</dbReference>
<dbReference type="GO" id="GO:0005737">
    <property type="term" value="C:cytoplasm"/>
    <property type="evidence" value="ECO:0007669"/>
    <property type="project" value="UniProtKB-ARBA"/>
</dbReference>
<dbReference type="GO" id="GO:0015935">
    <property type="term" value="C:small ribosomal subunit"/>
    <property type="evidence" value="ECO:0007669"/>
    <property type="project" value="InterPro"/>
</dbReference>
<dbReference type="GO" id="GO:0019843">
    <property type="term" value="F:rRNA binding"/>
    <property type="evidence" value="ECO:0007669"/>
    <property type="project" value="UniProtKB-UniRule"/>
</dbReference>
<dbReference type="GO" id="GO:0003735">
    <property type="term" value="F:structural constituent of ribosome"/>
    <property type="evidence" value="ECO:0007669"/>
    <property type="project" value="InterPro"/>
</dbReference>
<dbReference type="GO" id="GO:0000028">
    <property type="term" value="P:ribosomal small subunit assembly"/>
    <property type="evidence" value="ECO:0007669"/>
    <property type="project" value="TreeGrafter"/>
</dbReference>
<dbReference type="GO" id="GO:0006412">
    <property type="term" value="P:translation"/>
    <property type="evidence" value="ECO:0007669"/>
    <property type="project" value="UniProtKB-UniRule"/>
</dbReference>
<dbReference type="FunFam" id="3.30.860.10:FF:000001">
    <property type="entry name" value="30S ribosomal protein S19"/>
    <property type="match status" value="1"/>
</dbReference>
<dbReference type="Gene3D" id="3.30.860.10">
    <property type="entry name" value="30s Ribosomal Protein S19, Chain A"/>
    <property type="match status" value="1"/>
</dbReference>
<dbReference type="HAMAP" id="MF_00531">
    <property type="entry name" value="Ribosomal_uS19"/>
    <property type="match status" value="1"/>
</dbReference>
<dbReference type="InterPro" id="IPR002222">
    <property type="entry name" value="Ribosomal_uS19"/>
</dbReference>
<dbReference type="InterPro" id="IPR005732">
    <property type="entry name" value="Ribosomal_uS19_bac-type"/>
</dbReference>
<dbReference type="InterPro" id="IPR020934">
    <property type="entry name" value="Ribosomal_uS19_CS"/>
</dbReference>
<dbReference type="InterPro" id="IPR023575">
    <property type="entry name" value="Ribosomal_uS19_SF"/>
</dbReference>
<dbReference type="NCBIfam" id="TIGR01050">
    <property type="entry name" value="rpsS_bact"/>
    <property type="match status" value="1"/>
</dbReference>
<dbReference type="PANTHER" id="PTHR11880">
    <property type="entry name" value="RIBOSOMAL PROTEIN S19P FAMILY MEMBER"/>
    <property type="match status" value="1"/>
</dbReference>
<dbReference type="PANTHER" id="PTHR11880:SF8">
    <property type="entry name" value="SMALL RIBOSOMAL SUBUNIT PROTEIN US19M"/>
    <property type="match status" value="1"/>
</dbReference>
<dbReference type="Pfam" id="PF00203">
    <property type="entry name" value="Ribosomal_S19"/>
    <property type="match status" value="1"/>
</dbReference>
<dbReference type="PIRSF" id="PIRSF002144">
    <property type="entry name" value="Ribosomal_S19"/>
    <property type="match status" value="1"/>
</dbReference>
<dbReference type="PRINTS" id="PR00975">
    <property type="entry name" value="RIBOSOMALS19"/>
</dbReference>
<dbReference type="SUPFAM" id="SSF54570">
    <property type="entry name" value="Ribosomal protein S19"/>
    <property type="match status" value="1"/>
</dbReference>
<dbReference type="PROSITE" id="PS00323">
    <property type="entry name" value="RIBOSOMAL_S19"/>
    <property type="match status" value="1"/>
</dbReference>